<proteinExistence type="inferred from homology"/>
<gene>
    <name evidence="1" type="primary">mnmE</name>
    <name evidence="1" type="synonym">trmE</name>
    <name type="ordered locus">Gura_4428</name>
</gene>
<name>MNME_GEOUR</name>
<organism>
    <name type="scientific">Geotalea uraniireducens (strain Rf4)</name>
    <name type="common">Geobacter uraniireducens</name>
    <dbReference type="NCBI Taxonomy" id="351605"/>
    <lineage>
        <taxon>Bacteria</taxon>
        <taxon>Pseudomonadati</taxon>
        <taxon>Thermodesulfobacteriota</taxon>
        <taxon>Desulfuromonadia</taxon>
        <taxon>Geobacterales</taxon>
        <taxon>Geobacteraceae</taxon>
        <taxon>Geotalea</taxon>
    </lineage>
</organism>
<protein>
    <recommendedName>
        <fullName evidence="1">tRNA modification GTPase MnmE</fullName>
        <ecNumber evidence="1">3.6.-.-</ecNumber>
    </recommendedName>
</protein>
<accession>A5G9V3</accession>
<comment type="function">
    <text evidence="1">Exhibits a very high intrinsic GTPase hydrolysis rate. Involved in the addition of a carboxymethylaminomethyl (cmnm) group at the wobble position (U34) of certain tRNAs, forming tRNA-cmnm(5)s(2)U34.</text>
</comment>
<comment type="cofactor">
    <cofactor evidence="1">
        <name>K(+)</name>
        <dbReference type="ChEBI" id="CHEBI:29103"/>
    </cofactor>
    <text evidence="1">Binds 1 potassium ion per subunit.</text>
</comment>
<comment type="subunit">
    <text evidence="1">Homodimer. Heterotetramer of two MnmE and two MnmG subunits.</text>
</comment>
<comment type="subcellular location">
    <subcellularLocation>
        <location evidence="1">Cytoplasm</location>
    </subcellularLocation>
</comment>
<comment type="similarity">
    <text evidence="1">Belongs to the TRAFAC class TrmE-Era-EngA-EngB-Septin-like GTPase superfamily. TrmE GTPase family.</text>
</comment>
<feature type="chain" id="PRO_0000345791" description="tRNA modification GTPase MnmE">
    <location>
        <begin position="1"/>
        <end position="455"/>
    </location>
</feature>
<feature type="domain" description="TrmE-type G">
    <location>
        <begin position="220"/>
        <end position="375"/>
    </location>
</feature>
<feature type="binding site" evidence="1">
    <location>
        <position position="23"/>
    </location>
    <ligand>
        <name>(6S)-5-formyl-5,6,7,8-tetrahydrofolate</name>
        <dbReference type="ChEBI" id="CHEBI:57457"/>
    </ligand>
</feature>
<feature type="binding site" evidence="1">
    <location>
        <position position="85"/>
    </location>
    <ligand>
        <name>(6S)-5-formyl-5,6,7,8-tetrahydrofolate</name>
        <dbReference type="ChEBI" id="CHEBI:57457"/>
    </ligand>
</feature>
<feature type="binding site" evidence="1">
    <location>
        <position position="124"/>
    </location>
    <ligand>
        <name>(6S)-5-formyl-5,6,7,8-tetrahydrofolate</name>
        <dbReference type="ChEBI" id="CHEBI:57457"/>
    </ligand>
</feature>
<feature type="binding site" evidence="1">
    <location>
        <begin position="230"/>
        <end position="235"/>
    </location>
    <ligand>
        <name>GTP</name>
        <dbReference type="ChEBI" id="CHEBI:37565"/>
    </ligand>
</feature>
<feature type="binding site" evidence="1">
    <location>
        <position position="230"/>
    </location>
    <ligand>
        <name>K(+)</name>
        <dbReference type="ChEBI" id="CHEBI:29103"/>
    </ligand>
</feature>
<feature type="binding site" evidence="1">
    <location>
        <position position="234"/>
    </location>
    <ligand>
        <name>Mg(2+)</name>
        <dbReference type="ChEBI" id="CHEBI:18420"/>
    </ligand>
</feature>
<feature type="binding site" evidence="1">
    <location>
        <begin position="249"/>
        <end position="255"/>
    </location>
    <ligand>
        <name>GTP</name>
        <dbReference type="ChEBI" id="CHEBI:37565"/>
    </ligand>
</feature>
<feature type="binding site" evidence="1">
    <location>
        <position position="249"/>
    </location>
    <ligand>
        <name>K(+)</name>
        <dbReference type="ChEBI" id="CHEBI:29103"/>
    </ligand>
</feature>
<feature type="binding site" evidence="1">
    <location>
        <position position="251"/>
    </location>
    <ligand>
        <name>K(+)</name>
        <dbReference type="ChEBI" id="CHEBI:29103"/>
    </ligand>
</feature>
<feature type="binding site" evidence="1">
    <location>
        <position position="254"/>
    </location>
    <ligand>
        <name>K(+)</name>
        <dbReference type="ChEBI" id="CHEBI:29103"/>
    </ligand>
</feature>
<feature type="binding site" evidence="1">
    <location>
        <position position="255"/>
    </location>
    <ligand>
        <name>Mg(2+)</name>
        <dbReference type="ChEBI" id="CHEBI:18420"/>
    </ligand>
</feature>
<feature type="binding site" evidence="1">
    <location>
        <begin position="274"/>
        <end position="277"/>
    </location>
    <ligand>
        <name>GTP</name>
        <dbReference type="ChEBI" id="CHEBI:37565"/>
    </ligand>
</feature>
<feature type="binding site" evidence="1">
    <location>
        <position position="455"/>
    </location>
    <ligand>
        <name>(6S)-5-formyl-5,6,7,8-tetrahydrofolate</name>
        <dbReference type="ChEBI" id="CHEBI:57457"/>
    </ligand>
</feature>
<sequence length="455" mass="49606">MYVQDTIAAISTPTGEGGVGIIRVSGRHVLSIADAIFKRNRDGGLQSHRFYYGAIIDPVSADCLDEVMVVFMKGPHSYTREDVLEIQCHGGYLVVQRILDLVLQQGTRLAGPGEFTKRAFLNGRIDLVQAEAIIDVIRSKTEKSLALAQHQREGLLSQRIARVKDGIVSSLALIEAFIDFPEEDIDVLGIQQVGAHVDCSLTELETLLAGFNEGKVLRDGVSVVIAGKPNVGKSSLLNTLLREKRAIVTSVPGTTRDLIEEVVTIKGLPVKLLDTAGIRESDDRVEREGIKLSLDKIPSADLVLFIIDSSLPFSSEDQAILDVLAPCNFIVVMNKSDICRSFDMPQLPDVPIIAVSTLTGDGIDALQDAIFEAFIHNHAVDSREYVAVSQARHRDALQKSRDALLRFRGNLVAGMELDLLAIDLRDALSAIGEVTGETTADDVLDLIFQRFCIGK</sequence>
<dbReference type="EC" id="3.6.-.-" evidence="1"/>
<dbReference type="EMBL" id="CP000698">
    <property type="protein sequence ID" value="ABQ28571.1"/>
    <property type="molecule type" value="Genomic_DNA"/>
</dbReference>
<dbReference type="RefSeq" id="WP_011941197.1">
    <property type="nucleotide sequence ID" value="NC_009483.1"/>
</dbReference>
<dbReference type="SMR" id="A5G9V3"/>
<dbReference type="STRING" id="351605.Gura_4428"/>
<dbReference type="KEGG" id="gur:Gura_4428"/>
<dbReference type="HOGENOM" id="CLU_019624_4_1_7"/>
<dbReference type="OrthoDB" id="9805918at2"/>
<dbReference type="Proteomes" id="UP000006695">
    <property type="component" value="Chromosome"/>
</dbReference>
<dbReference type="GO" id="GO:0005829">
    <property type="term" value="C:cytosol"/>
    <property type="evidence" value="ECO:0007669"/>
    <property type="project" value="TreeGrafter"/>
</dbReference>
<dbReference type="GO" id="GO:0005525">
    <property type="term" value="F:GTP binding"/>
    <property type="evidence" value="ECO:0007669"/>
    <property type="project" value="UniProtKB-UniRule"/>
</dbReference>
<dbReference type="GO" id="GO:0003924">
    <property type="term" value="F:GTPase activity"/>
    <property type="evidence" value="ECO:0007669"/>
    <property type="project" value="UniProtKB-UniRule"/>
</dbReference>
<dbReference type="GO" id="GO:0046872">
    <property type="term" value="F:metal ion binding"/>
    <property type="evidence" value="ECO:0007669"/>
    <property type="project" value="UniProtKB-KW"/>
</dbReference>
<dbReference type="GO" id="GO:0030488">
    <property type="term" value="P:tRNA methylation"/>
    <property type="evidence" value="ECO:0007669"/>
    <property type="project" value="TreeGrafter"/>
</dbReference>
<dbReference type="GO" id="GO:0002098">
    <property type="term" value="P:tRNA wobble uridine modification"/>
    <property type="evidence" value="ECO:0007669"/>
    <property type="project" value="TreeGrafter"/>
</dbReference>
<dbReference type="CDD" id="cd04164">
    <property type="entry name" value="trmE"/>
    <property type="match status" value="1"/>
</dbReference>
<dbReference type="CDD" id="cd14858">
    <property type="entry name" value="TrmE_N"/>
    <property type="match status" value="1"/>
</dbReference>
<dbReference type="FunFam" id="3.30.1360.120:FF:000003">
    <property type="entry name" value="tRNA modification GTPase MnmE"/>
    <property type="match status" value="1"/>
</dbReference>
<dbReference type="FunFam" id="3.40.50.300:FF:000494">
    <property type="entry name" value="tRNA modification GTPase MnmE"/>
    <property type="match status" value="1"/>
</dbReference>
<dbReference type="Gene3D" id="3.40.50.300">
    <property type="entry name" value="P-loop containing nucleotide triphosphate hydrolases"/>
    <property type="match status" value="1"/>
</dbReference>
<dbReference type="Gene3D" id="3.30.1360.120">
    <property type="entry name" value="Probable tRNA modification gtpase trme, domain 1"/>
    <property type="match status" value="1"/>
</dbReference>
<dbReference type="Gene3D" id="1.20.120.430">
    <property type="entry name" value="tRNA modification GTPase MnmE domain 2"/>
    <property type="match status" value="1"/>
</dbReference>
<dbReference type="HAMAP" id="MF_00379">
    <property type="entry name" value="GTPase_MnmE"/>
    <property type="match status" value="1"/>
</dbReference>
<dbReference type="InterPro" id="IPR031168">
    <property type="entry name" value="G_TrmE"/>
</dbReference>
<dbReference type="InterPro" id="IPR006073">
    <property type="entry name" value="GTP-bd"/>
</dbReference>
<dbReference type="InterPro" id="IPR018948">
    <property type="entry name" value="GTP-bd_TrmE_N"/>
</dbReference>
<dbReference type="InterPro" id="IPR004520">
    <property type="entry name" value="GTPase_MnmE"/>
</dbReference>
<dbReference type="InterPro" id="IPR027368">
    <property type="entry name" value="MnmE_dom2"/>
</dbReference>
<dbReference type="InterPro" id="IPR025867">
    <property type="entry name" value="MnmE_helical"/>
</dbReference>
<dbReference type="InterPro" id="IPR027417">
    <property type="entry name" value="P-loop_NTPase"/>
</dbReference>
<dbReference type="InterPro" id="IPR005225">
    <property type="entry name" value="Small_GTP-bd"/>
</dbReference>
<dbReference type="InterPro" id="IPR027266">
    <property type="entry name" value="TrmE/GcvT_dom1"/>
</dbReference>
<dbReference type="NCBIfam" id="TIGR00450">
    <property type="entry name" value="mnmE_trmE_thdF"/>
    <property type="match status" value="1"/>
</dbReference>
<dbReference type="NCBIfam" id="NF003661">
    <property type="entry name" value="PRK05291.1-3"/>
    <property type="match status" value="1"/>
</dbReference>
<dbReference type="NCBIfam" id="TIGR00231">
    <property type="entry name" value="small_GTP"/>
    <property type="match status" value="1"/>
</dbReference>
<dbReference type="PANTHER" id="PTHR42714">
    <property type="entry name" value="TRNA MODIFICATION GTPASE GTPBP3"/>
    <property type="match status" value="1"/>
</dbReference>
<dbReference type="PANTHER" id="PTHR42714:SF2">
    <property type="entry name" value="TRNA MODIFICATION GTPASE GTPBP3, MITOCHONDRIAL"/>
    <property type="match status" value="1"/>
</dbReference>
<dbReference type="Pfam" id="PF01926">
    <property type="entry name" value="MMR_HSR1"/>
    <property type="match status" value="1"/>
</dbReference>
<dbReference type="Pfam" id="PF12631">
    <property type="entry name" value="MnmE_helical"/>
    <property type="match status" value="1"/>
</dbReference>
<dbReference type="Pfam" id="PF10396">
    <property type="entry name" value="TrmE_N"/>
    <property type="match status" value="1"/>
</dbReference>
<dbReference type="SUPFAM" id="SSF52540">
    <property type="entry name" value="P-loop containing nucleoside triphosphate hydrolases"/>
    <property type="match status" value="1"/>
</dbReference>
<dbReference type="SUPFAM" id="SSF116878">
    <property type="entry name" value="TrmE connector domain"/>
    <property type="match status" value="1"/>
</dbReference>
<dbReference type="PROSITE" id="PS51709">
    <property type="entry name" value="G_TRME"/>
    <property type="match status" value="1"/>
</dbReference>
<evidence type="ECO:0000255" key="1">
    <source>
        <dbReference type="HAMAP-Rule" id="MF_00379"/>
    </source>
</evidence>
<keyword id="KW-0963">Cytoplasm</keyword>
<keyword id="KW-0342">GTP-binding</keyword>
<keyword id="KW-0378">Hydrolase</keyword>
<keyword id="KW-0460">Magnesium</keyword>
<keyword id="KW-0479">Metal-binding</keyword>
<keyword id="KW-0547">Nucleotide-binding</keyword>
<keyword id="KW-0630">Potassium</keyword>
<keyword id="KW-1185">Reference proteome</keyword>
<keyword id="KW-0819">tRNA processing</keyword>
<reference key="1">
    <citation type="submission" date="2007-05" db="EMBL/GenBank/DDBJ databases">
        <title>Complete sequence of Geobacter uraniireducens Rf4.</title>
        <authorList>
            <consortium name="US DOE Joint Genome Institute"/>
            <person name="Copeland A."/>
            <person name="Lucas S."/>
            <person name="Lapidus A."/>
            <person name="Barry K."/>
            <person name="Detter J.C."/>
            <person name="Glavina del Rio T."/>
            <person name="Hammon N."/>
            <person name="Israni S."/>
            <person name="Dalin E."/>
            <person name="Tice H."/>
            <person name="Pitluck S."/>
            <person name="Chertkov O."/>
            <person name="Brettin T."/>
            <person name="Bruce D."/>
            <person name="Han C."/>
            <person name="Schmutz J."/>
            <person name="Larimer F."/>
            <person name="Land M."/>
            <person name="Hauser L."/>
            <person name="Kyrpides N."/>
            <person name="Mikhailova N."/>
            <person name="Shelobolina E."/>
            <person name="Aklujkar M."/>
            <person name="Lovley D."/>
            <person name="Richardson P."/>
        </authorList>
    </citation>
    <scope>NUCLEOTIDE SEQUENCE [LARGE SCALE GENOMIC DNA]</scope>
    <source>
        <strain>ATCC BAA-1134 / JCM 13001 / Rf4</strain>
    </source>
</reference>